<protein>
    <recommendedName>
        <fullName evidence="1">Ribosomal RNA large subunit methyltransferase G</fullName>
        <ecNumber evidence="1">2.1.1.174</ecNumber>
    </recommendedName>
    <alternativeName>
        <fullName evidence="1">23S rRNA m2G1835 methyltransferase</fullName>
    </alternativeName>
    <alternativeName>
        <fullName evidence="1">rRNA (guanine-N(2)-)-methyltransferase RlmG</fullName>
    </alternativeName>
</protein>
<name>RLMG_YERE8</name>
<feature type="chain" id="PRO_0000366538" description="Ribosomal RNA large subunit methyltransferase G">
    <location>
        <begin position="1"/>
        <end position="396"/>
    </location>
</feature>
<sequence length="396" mass="44152">MSQVLLGTQSFELERFPPQENSNTLQAWEAADEYLLQNIDLNQIDGRPVLVFNDQFGTLTCALHAYRPFSVSDSYMSQLATAHNLRLNHLDEDVVTLLSSMDALPEAPKLVVIKIPKALALLEHQLRALRRVVAPDTVIIAGAKSRDVHNSTLQLFEKILGPTKTTLAWKKARLIHCEVADIPLAEEAPETVDWPLANTEYVIHNHANVFSRNNLDIGARFFMEILPYDVEGKIADLGCGNGVVGLIALEQNPLAEMLFVDESYMAVASSELNITYNRPQDLSRCEFMVSHGLAGVERESLQLVLCNPPFHQQHAVSDHVAWQMFCDAKRCLKVGGELMIVGNRHLDYFHKLKRLFGNCETLDSNQKFMVLKAVKTASSRSEGGGSGSLDMSYSDF</sequence>
<keyword id="KW-0963">Cytoplasm</keyword>
<keyword id="KW-0489">Methyltransferase</keyword>
<keyword id="KW-0698">rRNA processing</keyword>
<keyword id="KW-0949">S-adenosyl-L-methionine</keyword>
<keyword id="KW-0808">Transferase</keyword>
<accession>A1JR10</accession>
<gene>
    <name evidence="1" type="primary">rlmG</name>
    <name type="ordered locus">YE3699</name>
</gene>
<reference key="1">
    <citation type="journal article" date="2006" name="PLoS Genet.">
        <title>The complete genome sequence and comparative genome analysis of the high pathogenicity Yersinia enterocolitica strain 8081.</title>
        <authorList>
            <person name="Thomson N.R."/>
            <person name="Howard S."/>
            <person name="Wren B.W."/>
            <person name="Holden M.T.G."/>
            <person name="Crossman L."/>
            <person name="Challis G.L."/>
            <person name="Churcher C."/>
            <person name="Mungall K."/>
            <person name="Brooks K."/>
            <person name="Chillingworth T."/>
            <person name="Feltwell T."/>
            <person name="Abdellah Z."/>
            <person name="Hauser H."/>
            <person name="Jagels K."/>
            <person name="Maddison M."/>
            <person name="Moule S."/>
            <person name="Sanders M."/>
            <person name="Whitehead S."/>
            <person name="Quail M.A."/>
            <person name="Dougan G."/>
            <person name="Parkhill J."/>
            <person name="Prentice M.B."/>
        </authorList>
    </citation>
    <scope>NUCLEOTIDE SEQUENCE [LARGE SCALE GENOMIC DNA]</scope>
    <source>
        <strain>NCTC 13174 / 8081</strain>
    </source>
</reference>
<comment type="function">
    <text evidence="1">Specifically methylates the guanine in position 1835 (m2G1835) of 23S rRNA.</text>
</comment>
<comment type="catalytic activity">
    <reaction evidence="1">
        <text>guanosine(1835) in 23S rRNA + S-adenosyl-L-methionine = N(2)-methylguanosine(1835) in 23S rRNA + S-adenosyl-L-homocysteine + H(+)</text>
        <dbReference type="Rhea" id="RHEA:42744"/>
        <dbReference type="Rhea" id="RHEA-COMP:10217"/>
        <dbReference type="Rhea" id="RHEA-COMP:10218"/>
        <dbReference type="ChEBI" id="CHEBI:15378"/>
        <dbReference type="ChEBI" id="CHEBI:57856"/>
        <dbReference type="ChEBI" id="CHEBI:59789"/>
        <dbReference type="ChEBI" id="CHEBI:74269"/>
        <dbReference type="ChEBI" id="CHEBI:74481"/>
        <dbReference type="EC" id="2.1.1.174"/>
    </reaction>
</comment>
<comment type="subcellular location">
    <subcellularLocation>
        <location evidence="1">Cytoplasm</location>
    </subcellularLocation>
</comment>
<comment type="similarity">
    <text evidence="1">Belongs to the methyltransferase superfamily. RlmG family.</text>
</comment>
<dbReference type="EC" id="2.1.1.174" evidence="1"/>
<dbReference type="EMBL" id="AM286415">
    <property type="protein sequence ID" value="CAL13726.1"/>
    <property type="molecule type" value="Genomic_DNA"/>
</dbReference>
<dbReference type="RefSeq" id="WP_011817237.1">
    <property type="nucleotide sequence ID" value="NC_008800.1"/>
</dbReference>
<dbReference type="RefSeq" id="YP_001007854.1">
    <property type="nucleotide sequence ID" value="NC_008800.1"/>
</dbReference>
<dbReference type="SMR" id="A1JR10"/>
<dbReference type="KEGG" id="yen:YE3699"/>
<dbReference type="PATRIC" id="fig|393305.7.peg.3939"/>
<dbReference type="eggNOG" id="COG2813">
    <property type="taxonomic scope" value="Bacteria"/>
</dbReference>
<dbReference type="HOGENOM" id="CLU_040288_4_0_6"/>
<dbReference type="OrthoDB" id="29650at2"/>
<dbReference type="Proteomes" id="UP000000642">
    <property type="component" value="Chromosome"/>
</dbReference>
<dbReference type="GO" id="GO:0005737">
    <property type="term" value="C:cytoplasm"/>
    <property type="evidence" value="ECO:0007669"/>
    <property type="project" value="UniProtKB-SubCell"/>
</dbReference>
<dbReference type="GO" id="GO:0052916">
    <property type="term" value="F:23S rRNA (guanine(1835)-N(2))-methyltransferase activity"/>
    <property type="evidence" value="ECO:0007669"/>
    <property type="project" value="UniProtKB-EC"/>
</dbReference>
<dbReference type="GO" id="GO:0003676">
    <property type="term" value="F:nucleic acid binding"/>
    <property type="evidence" value="ECO:0007669"/>
    <property type="project" value="InterPro"/>
</dbReference>
<dbReference type="CDD" id="cd02440">
    <property type="entry name" value="AdoMet_MTases"/>
    <property type="match status" value="1"/>
</dbReference>
<dbReference type="Gene3D" id="3.40.50.150">
    <property type="entry name" value="Vaccinia Virus protein VP39"/>
    <property type="match status" value="2"/>
</dbReference>
<dbReference type="HAMAP" id="MF_01859">
    <property type="entry name" value="23SrRNA_methyltr_G"/>
    <property type="match status" value="1"/>
</dbReference>
<dbReference type="InterPro" id="IPR002052">
    <property type="entry name" value="DNA_methylase_N6_adenine_CS"/>
</dbReference>
<dbReference type="InterPro" id="IPR017237">
    <property type="entry name" value="rRNA_m2G-MeTrfase_RlmG"/>
</dbReference>
<dbReference type="InterPro" id="IPR046977">
    <property type="entry name" value="RsmC/RlmG"/>
</dbReference>
<dbReference type="InterPro" id="IPR029063">
    <property type="entry name" value="SAM-dependent_MTases_sf"/>
</dbReference>
<dbReference type="InterPro" id="IPR007848">
    <property type="entry name" value="Small_mtfrase_dom"/>
</dbReference>
<dbReference type="NCBIfam" id="NF011577">
    <property type="entry name" value="PRK15001.1"/>
    <property type="match status" value="1"/>
</dbReference>
<dbReference type="PANTHER" id="PTHR47816:SF5">
    <property type="entry name" value="RIBOSOMAL RNA LARGE SUBUNIT METHYLTRANSFERASE G"/>
    <property type="match status" value="1"/>
</dbReference>
<dbReference type="PANTHER" id="PTHR47816">
    <property type="entry name" value="RIBOSOMAL RNA SMALL SUBUNIT METHYLTRANSFERASE C"/>
    <property type="match status" value="1"/>
</dbReference>
<dbReference type="Pfam" id="PF05175">
    <property type="entry name" value="MTS"/>
    <property type="match status" value="1"/>
</dbReference>
<dbReference type="PIRSF" id="PIRSF037565">
    <property type="entry name" value="RRNA_m2G_Mtase_RsmD_prd"/>
    <property type="match status" value="1"/>
</dbReference>
<dbReference type="SUPFAM" id="SSF53335">
    <property type="entry name" value="S-adenosyl-L-methionine-dependent methyltransferases"/>
    <property type="match status" value="1"/>
</dbReference>
<organism>
    <name type="scientific">Yersinia enterocolitica serotype O:8 / biotype 1B (strain NCTC 13174 / 8081)</name>
    <dbReference type="NCBI Taxonomy" id="393305"/>
    <lineage>
        <taxon>Bacteria</taxon>
        <taxon>Pseudomonadati</taxon>
        <taxon>Pseudomonadota</taxon>
        <taxon>Gammaproteobacteria</taxon>
        <taxon>Enterobacterales</taxon>
        <taxon>Yersiniaceae</taxon>
        <taxon>Yersinia</taxon>
    </lineage>
</organism>
<proteinExistence type="inferred from homology"/>
<evidence type="ECO:0000255" key="1">
    <source>
        <dbReference type="HAMAP-Rule" id="MF_01859"/>
    </source>
</evidence>